<name>FLIE_SALPB</name>
<proteinExistence type="inferred from homology"/>
<keyword id="KW-0975">Bacterial flagellum</keyword>
<accession>A9MU40</accession>
<reference key="1">
    <citation type="submission" date="2007-11" db="EMBL/GenBank/DDBJ databases">
        <authorList>
            <consortium name="The Salmonella enterica serovar Paratyphi B Genome Sequencing Project"/>
            <person name="McClelland M."/>
            <person name="Sanderson E.K."/>
            <person name="Porwollik S."/>
            <person name="Spieth J."/>
            <person name="Clifton W.S."/>
            <person name="Fulton R."/>
            <person name="Cordes M."/>
            <person name="Wollam A."/>
            <person name="Shah N."/>
            <person name="Pepin K."/>
            <person name="Bhonagiri V."/>
            <person name="Nash W."/>
            <person name="Johnson M."/>
            <person name="Thiruvilangam P."/>
            <person name="Wilson R."/>
        </authorList>
    </citation>
    <scope>NUCLEOTIDE SEQUENCE [LARGE SCALE GENOMIC DNA]</scope>
    <source>
        <strain>ATCC BAA-1250 / SPB7</strain>
    </source>
</reference>
<dbReference type="EMBL" id="CP000886">
    <property type="protein sequence ID" value="ABX66596.1"/>
    <property type="molecule type" value="Genomic_DNA"/>
</dbReference>
<dbReference type="RefSeq" id="WP_000719037.1">
    <property type="nucleotide sequence ID" value="NC_010102.1"/>
</dbReference>
<dbReference type="SMR" id="A9MU40"/>
<dbReference type="KEGG" id="spq:SPAB_01181"/>
<dbReference type="PATRIC" id="fig|1016998.12.peg.1115"/>
<dbReference type="HOGENOM" id="CLU_147249_0_2_6"/>
<dbReference type="BioCyc" id="SENT1016998:SPAB_RS04905-MONOMER"/>
<dbReference type="Proteomes" id="UP000008556">
    <property type="component" value="Chromosome"/>
</dbReference>
<dbReference type="GO" id="GO:0009425">
    <property type="term" value="C:bacterial-type flagellum basal body"/>
    <property type="evidence" value="ECO:0007669"/>
    <property type="project" value="UniProtKB-SubCell"/>
</dbReference>
<dbReference type="GO" id="GO:0003774">
    <property type="term" value="F:cytoskeletal motor activity"/>
    <property type="evidence" value="ECO:0007669"/>
    <property type="project" value="InterPro"/>
</dbReference>
<dbReference type="GO" id="GO:0005198">
    <property type="term" value="F:structural molecule activity"/>
    <property type="evidence" value="ECO:0007669"/>
    <property type="project" value="InterPro"/>
</dbReference>
<dbReference type="GO" id="GO:0071973">
    <property type="term" value="P:bacterial-type flagellum-dependent cell motility"/>
    <property type="evidence" value="ECO:0007669"/>
    <property type="project" value="InterPro"/>
</dbReference>
<dbReference type="HAMAP" id="MF_00724">
    <property type="entry name" value="FliE"/>
    <property type="match status" value="1"/>
</dbReference>
<dbReference type="InterPro" id="IPR001624">
    <property type="entry name" value="FliE"/>
</dbReference>
<dbReference type="NCBIfam" id="TIGR00205">
    <property type="entry name" value="fliE"/>
    <property type="match status" value="1"/>
</dbReference>
<dbReference type="PANTHER" id="PTHR34653">
    <property type="match status" value="1"/>
</dbReference>
<dbReference type="PANTHER" id="PTHR34653:SF1">
    <property type="entry name" value="FLAGELLAR HOOK-BASAL BODY COMPLEX PROTEIN FLIE"/>
    <property type="match status" value="1"/>
</dbReference>
<dbReference type="Pfam" id="PF02049">
    <property type="entry name" value="FliE"/>
    <property type="match status" value="1"/>
</dbReference>
<dbReference type="PRINTS" id="PR01006">
    <property type="entry name" value="FLGHOOKFLIE"/>
</dbReference>
<comment type="subcellular location">
    <subcellularLocation>
        <location evidence="1">Bacterial flagellum basal body</location>
    </subcellularLocation>
</comment>
<comment type="similarity">
    <text evidence="1">Belongs to the FliE family.</text>
</comment>
<sequence>MAAIQGIEGVISQLQATAMAARGQDTHSQSTVSFAGQLHAALDRISDRQTAARVQAEKFTLGEPGIALNDVMADMQKASVSMQMGIQVRNKLVAAYQEVMSMQV</sequence>
<gene>
    <name evidence="1" type="primary">fliE</name>
    <name type="ordered locus">SPAB_01181</name>
</gene>
<feature type="chain" id="PRO_1000083314" description="Flagellar hook-basal body complex protein FliE">
    <location>
        <begin position="1"/>
        <end position="104"/>
    </location>
</feature>
<organism>
    <name type="scientific">Salmonella paratyphi B (strain ATCC BAA-1250 / SPB7)</name>
    <dbReference type="NCBI Taxonomy" id="1016998"/>
    <lineage>
        <taxon>Bacteria</taxon>
        <taxon>Pseudomonadati</taxon>
        <taxon>Pseudomonadota</taxon>
        <taxon>Gammaproteobacteria</taxon>
        <taxon>Enterobacterales</taxon>
        <taxon>Enterobacteriaceae</taxon>
        <taxon>Salmonella</taxon>
    </lineage>
</organism>
<evidence type="ECO:0000255" key="1">
    <source>
        <dbReference type="HAMAP-Rule" id="MF_00724"/>
    </source>
</evidence>
<protein>
    <recommendedName>
        <fullName evidence="1">Flagellar hook-basal body complex protein FliE</fullName>
    </recommendedName>
</protein>